<gene>
    <name type="ORF">TVAG_038970</name>
</gene>
<protein>
    <recommendedName>
        <fullName evidence="1">tRNA (guanine(37)-N(1))-methyltransferase</fullName>
        <ecNumber evidence="1">2.1.1.228</ecNumber>
    </recommendedName>
    <alternativeName>
        <fullName evidence="1">M1G-methyltransferase</fullName>
    </alternativeName>
    <alternativeName>
        <fullName evidence="1">tRNA [GM37] methyltransferase</fullName>
    </alternativeName>
    <alternativeName>
        <fullName evidence="1">tRNA methyltransferase 5 homolog</fullName>
    </alternativeName>
</protein>
<feature type="chain" id="PRO_0000414174" description="tRNA (guanine(37)-N(1))-methyltransferase">
    <location>
        <begin position="1"/>
        <end position="378"/>
    </location>
</feature>
<feature type="binding site" evidence="1">
    <location>
        <position position="196"/>
    </location>
    <ligand>
        <name>S-adenosyl-L-methionine</name>
        <dbReference type="ChEBI" id="CHEBI:59789"/>
    </ligand>
</feature>
<feature type="binding site" evidence="1">
    <location>
        <begin position="234"/>
        <end position="235"/>
    </location>
    <ligand>
        <name>S-adenosyl-L-methionine</name>
        <dbReference type="ChEBI" id="CHEBI:59789"/>
    </ligand>
</feature>
<feature type="binding site" evidence="1">
    <location>
        <begin position="262"/>
        <end position="263"/>
    </location>
    <ligand>
        <name>S-adenosyl-L-methionine</name>
        <dbReference type="ChEBI" id="CHEBI:59789"/>
    </ligand>
</feature>
<feature type="binding site" evidence="1">
    <location>
        <position position="282"/>
    </location>
    <ligand>
        <name>S-adenosyl-L-methionine</name>
        <dbReference type="ChEBI" id="CHEBI:59789"/>
    </ligand>
</feature>
<sequence length="378" mass="42818">MDIDPKDITISKEFQSIVVPKQLTGPVKAILQEKKLSATETKNVVDDPNGKRIILIPEVTELPKEVLEKVPEAKLEPYPVTLTYKQLTYIELLRHYIPEPLVIPTSFETIGHIAHLNLPDELLPYKKVIGECIILKNPCIKTVAIKQGPINNVYRNMELEVIAGKNDFITEVKQSGFTFKMDFSKVYWNSRLQYEHDSVVATFKENSLVCDAMCGIGPFAVRAAKKGCRVRANDLNPDSYYWLKENCKINGVSENVECFNMDAREFIRKQFDNGGCDYIVMNLPGTAVEFLDAIGEGAKKNRETARMPIVIFHSFDNKDGDYVASLRARAEKALGMKLPEMDIHNVRDVSPGKFMFRCTFSCADLFADEDDDKPHKVE</sequence>
<reference key="1">
    <citation type="journal article" date="2007" name="Science">
        <title>Draft genome sequence of the sexually transmitted pathogen Trichomonas vaginalis.</title>
        <authorList>
            <person name="Carlton J.M."/>
            <person name="Hirt R.P."/>
            <person name="Silva J.C."/>
            <person name="Delcher A.L."/>
            <person name="Schatz M."/>
            <person name="Zhao Q."/>
            <person name="Wortman J.R."/>
            <person name="Bidwell S.L."/>
            <person name="Alsmark U.C.M."/>
            <person name="Besteiro S."/>
            <person name="Sicheritz-Ponten T."/>
            <person name="Noel C.J."/>
            <person name="Dacks J.B."/>
            <person name="Foster P.G."/>
            <person name="Simillion C."/>
            <person name="Van de Peer Y."/>
            <person name="Miranda-Saavedra D."/>
            <person name="Barton G.J."/>
            <person name="Westrop G.D."/>
            <person name="Mueller S."/>
            <person name="Dessi D."/>
            <person name="Fiori P.L."/>
            <person name="Ren Q."/>
            <person name="Paulsen I."/>
            <person name="Zhang H."/>
            <person name="Bastida-Corcuera F.D."/>
            <person name="Simoes-Barbosa A."/>
            <person name="Brown M.T."/>
            <person name="Hayes R.D."/>
            <person name="Mukherjee M."/>
            <person name="Okumura C.Y."/>
            <person name="Schneider R."/>
            <person name="Smith A.J."/>
            <person name="Vanacova S."/>
            <person name="Villalvazo M."/>
            <person name="Haas B.J."/>
            <person name="Pertea M."/>
            <person name="Feldblyum T.V."/>
            <person name="Utterback T.R."/>
            <person name="Shu C.L."/>
            <person name="Osoegawa K."/>
            <person name="de Jong P.J."/>
            <person name="Hrdy I."/>
            <person name="Horvathova L."/>
            <person name="Zubacova Z."/>
            <person name="Dolezal P."/>
            <person name="Malik S.B."/>
            <person name="Logsdon J.M. Jr."/>
            <person name="Henze K."/>
            <person name="Gupta A."/>
            <person name="Wang C.C."/>
            <person name="Dunne R.L."/>
            <person name="Upcroft J.A."/>
            <person name="Upcroft P."/>
            <person name="White O."/>
            <person name="Salzberg S.L."/>
            <person name="Tang P."/>
            <person name="Chiu C.-H."/>
            <person name="Lee Y.-S."/>
            <person name="Embley T.M."/>
            <person name="Coombs G.H."/>
            <person name="Mottram J.C."/>
            <person name="Tachezy J."/>
            <person name="Fraser-Liggett C.M."/>
            <person name="Johnson P.J."/>
        </authorList>
    </citation>
    <scope>NUCLEOTIDE SEQUENCE [LARGE SCALE GENOMIC DNA]</scope>
    <source>
        <strain>ATCC PRA-98 / G3</strain>
    </source>
</reference>
<accession>A2E5K9</accession>
<evidence type="ECO:0000255" key="1">
    <source>
        <dbReference type="HAMAP-Rule" id="MF_03152"/>
    </source>
</evidence>
<evidence type="ECO:0000305" key="2"/>
<name>TRM5_TRIV3</name>
<proteinExistence type="inferred from homology"/>
<dbReference type="EC" id="2.1.1.228" evidence="1"/>
<dbReference type="EMBL" id="DS113308">
    <property type="protein sequence ID" value="EAY12050.1"/>
    <property type="molecule type" value="Genomic_DNA"/>
</dbReference>
<dbReference type="RefSeq" id="XP_001324273.1">
    <property type="nucleotide sequence ID" value="XM_001324238.1"/>
</dbReference>
<dbReference type="SMR" id="A2E5K9"/>
<dbReference type="FunCoup" id="A2E5K9">
    <property type="interactions" value="320"/>
</dbReference>
<dbReference type="STRING" id="5722.A2E5K9"/>
<dbReference type="KEGG" id="tva:TVAG_2v0240170"/>
<dbReference type="VEuPathDB" id="TrichDB:TVAG_038970"/>
<dbReference type="VEuPathDB" id="TrichDB:TVAGG3_0240170"/>
<dbReference type="eggNOG" id="KOG2078">
    <property type="taxonomic scope" value="Eukaryota"/>
</dbReference>
<dbReference type="InParanoid" id="A2E5K9"/>
<dbReference type="OMA" id="KWMLCAT"/>
<dbReference type="OrthoDB" id="408788at2759"/>
<dbReference type="Proteomes" id="UP000001542">
    <property type="component" value="Unassembled WGS sequence"/>
</dbReference>
<dbReference type="GO" id="GO:0005737">
    <property type="term" value="C:cytoplasm"/>
    <property type="evidence" value="ECO:0000318"/>
    <property type="project" value="GO_Central"/>
</dbReference>
<dbReference type="GO" id="GO:0005759">
    <property type="term" value="C:mitochondrial matrix"/>
    <property type="evidence" value="ECO:0007669"/>
    <property type="project" value="UniProtKB-SubCell"/>
</dbReference>
<dbReference type="GO" id="GO:0005634">
    <property type="term" value="C:nucleus"/>
    <property type="evidence" value="ECO:0007669"/>
    <property type="project" value="UniProtKB-SubCell"/>
</dbReference>
<dbReference type="GO" id="GO:0052906">
    <property type="term" value="F:tRNA (guanine(37)-N1)-methyltransferase activity"/>
    <property type="evidence" value="ECO:0007669"/>
    <property type="project" value="UniProtKB-UniRule"/>
</dbReference>
<dbReference type="GO" id="GO:0008175">
    <property type="term" value="F:tRNA methyltransferase activity"/>
    <property type="evidence" value="ECO:0000318"/>
    <property type="project" value="GO_Central"/>
</dbReference>
<dbReference type="GO" id="GO:0002939">
    <property type="term" value="P:tRNA N1-guanine methylation"/>
    <property type="evidence" value="ECO:0000318"/>
    <property type="project" value="GO_Central"/>
</dbReference>
<dbReference type="CDD" id="cd02440">
    <property type="entry name" value="AdoMet_MTases"/>
    <property type="match status" value="1"/>
</dbReference>
<dbReference type="FunFam" id="3.30.300.110:FF:000001">
    <property type="entry name" value="tRNA (guanine(37)-N1)-methyltransferase"/>
    <property type="match status" value="1"/>
</dbReference>
<dbReference type="Gene3D" id="3.30.300.110">
    <property type="entry name" value="Met-10+ protein-like domains"/>
    <property type="match status" value="1"/>
</dbReference>
<dbReference type="Gene3D" id="3.40.50.150">
    <property type="entry name" value="Vaccinia Virus protein VP39"/>
    <property type="match status" value="1"/>
</dbReference>
<dbReference type="HAMAP" id="MF_03152">
    <property type="entry name" value="TRM5"/>
    <property type="match status" value="1"/>
</dbReference>
<dbReference type="InterPro" id="IPR030382">
    <property type="entry name" value="MeTrfase_TRM5/TYW2"/>
</dbReference>
<dbReference type="InterPro" id="IPR029063">
    <property type="entry name" value="SAM-dependent_MTases_sf"/>
</dbReference>
<dbReference type="InterPro" id="IPR056743">
    <property type="entry name" value="TRM5-TYW2-like_MTfase"/>
</dbReference>
<dbReference type="InterPro" id="IPR056744">
    <property type="entry name" value="TRM5/TYW2-like_N"/>
</dbReference>
<dbReference type="InterPro" id="IPR025792">
    <property type="entry name" value="tRNA_Gua_MeTrfase_euk"/>
</dbReference>
<dbReference type="PANTHER" id="PTHR23245:SF36">
    <property type="entry name" value="TRNA (GUANINE(37)-N1)-METHYLTRANSFERASE"/>
    <property type="match status" value="1"/>
</dbReference>
<dbReference type="PANTHER" id="PTHR23245">
    <property type="entry name" value="TRNA METHYLTRANSFERASE"/>
    <property type="match status" value="1"/>
</dbReference>
<dbReference type="Pfam" id="PF02475">
    <property type="entry name" value="TRM5-TYW2_MTfase"/>
    <property type="match status" value="1"/>
</dbReference>
<dbReference type="Pfam" id="PF25133">
    <property type="entry name" value="TYW2_N_2"/>
    <property type="match status" value="1"/>
</dbReference>
<dbReference type="SUPFAM" id="SSF53335">
    <property type="entry name" value="S-adenosyl-L-methionine-dependent methyltransferases"/>
    <property type="match status" value="1"/>
</dbReference>
<dbReference type="PROSITE" id="PS51684">
    <property type="entry name" value="SAM_MT_TRM5_TYW2"/>
    <property type="match status" value="1"/>
</dbReference>
<comment type="function">
    <text evidence="1">Specifically methylates the N1 position of guanosine-37 in various cytoplasmic and mitochondrial tRNAs. Methylation is not dependent on the nature of the nucleoside 5' of the target nucleoside. This is the first step in the biosynthesis of wybutosine (yW), a modified base adjacent to the anticodon of tRNAs and required for accurate decoding.</text>
</comment>
<comment type="catalytic activity">
    <reaction evidence="1">
        <text>guanosine(37) in tRNA + S-adenosyl-L-methionine = N(1)-methylguanosine(37) in tRNA + S-adenosyl-L-homocysteine + H(+)</text>
        <dbReference type="Rhea" id="RHEA:36899"/>
        <dbReference type="Rhea" id="RHEA-COMP:10145"/>
        <dbReference type="Rhea" id="RHEA-COMP:10147"/>
        <dbReference type="ChEBI" id="CHEBI:15378"/>
        <dbReference type="ChEBI" id="CHEBI:57856"/>
        <dbReference type="ChEBI" id="CHEBI:59789"/>
        <dbReference type="ChEBI" id="CHEBI:73542"/>
        <dbReference type="ChEBI" id="CHEBI:74269"/>
        <dbReference type="EC" id="2.1.1.228"/>
    </reaction>
</comment>
<comment type="subunit">
    <text evidence="1">Monomer.</text>
</comment>
<comment type="subcellular location">
    <subcellularLocation>
        <location evidence="1">Mitochondrion matrix</location>
    </subcellularLocation>
    <subcellularLocation>
        <location evidence="1">Nucleus</location>
    </subcellularLocation>
    <subcellularLocation>
        <location evidence="1">Cytoplasm</location>
    </subcellularLocation>
    <text evidence="1">Predominantly in the mitochondria and in the nucleus.</text>
</comment>
<comment type="similarity">
    <text evidence="2">Belongs to the class I-like SAM-binding methyltransferase superfamily. TRM5/TYW2 family.</text>
</comment>
<organism>
    <name type="scientific">Trichomonas vaginalis (strain ATCC PRA-98 / G3)</name>
    <dbReference type="NCBI Taxonomy" id="412133"/>
    <lineage>
        <taxon>Eukaryota</taxon>
        <taxon>Metamonada</taxon>
        <taxon>Parabasalia</taxon>
        <taxon>Trichomonadida</taxon>
        <taxon>Trichomonadidae</taxon>
        <taxon>Trichomonas</taxon>
    </lineage>
</organism>
<keyword id="KW-0963">Cytoplasm</keyword>
<keyword id="KW-0489">Methyltransferase</keyword>
<keyword id="KW-0496">Mitochondrion</keyword>
<keyword id="KW-0539">Nucleus</keyword>
<keyword id="KW-1185">Reference proteome</keyword>
<keyword id="KW-0949">S-adenosyl-L-methionine</keyword>
<keyword id="KW-0808">Transferase</keyword>
<keyword id="KW-0819">tRNA processing</keyword>